<keyword id="KW-0378">Hydrolase</keyword>
<keyword id="KW-0479">Metal-binding</keyword>
<keyword id="KW-0665">Pyrimidine biosynthesis</keyword>
<keyword id="KW-0862">Zinc</keyword>
<evidence type="ECO:0000255" key="1">
    <source>
        <dbReference type="HAMAP-Rule" id="MF_00220"/>
    </source>
</evidence>
<proteinExistence type="inferred from homology"/>
<gene>
    <name evidence="1" type="primary">pyrC</name>
</gene>
<name>PYRC_BACCL</name>
<organism>
    <name type="scientific">Bacillus caldolyticus</name>
    <dbReference type="NCBI Taxonomy" id="1394"/>
    <lineage>
        <taxon>Bacteria</taxon>
        <taxon>Bacillati</taxon>
        <taxon>Bacillota</taxon>
        <taxon>Bacilli</taxon>
        <taxon>Bacillales</taxon>
        <taxon>Anoxybacillaceae</taxon>
        <taxon>Geobacillus</taxon>
        <taxon>Geobacillus thermoleovorans group</taxon>
    </lineage>
</organism>
<feature type="chain" id="PRO_0000147227" description="Dihydroorotase">
    <location>
        <begin position="1"/>
        <end position="427"/>
    </location>
</feature>
<feature type="active site" evidence="1">
    <location>
        <position position="305"/>
    </location>
</feature>
<feature type="binding site" evidence="1">
    <location>
        <position position="60"/>
    </location>
    <ligand>
        <name>Zn(2+)</name>
        <dbReference type="ChEBI" id="CHEBI:29105"/>
        <label>1</label>
    </ligand>
</feature>
<feature type="binding site" evidence="1">
    <location>
        <begin position="62"/>
        <end position="64"/>
    </location>
    <ligand>
        <name>substrate</name>
    </ligand>
</feature>
<feature type="binding site" evidence="1">
    <location>
        <position position="62"/>
    </location>
    <ligand>
        <name>Zn(2+)</name>
        <dbReference type="ChEBI" id="CHEBI:29105"/>
        <label>1</label>
    </ligand>
</feature>
<feature type="binding site" evidence="1">
    <location>
        <position position="94"/>
    </location>
    <ligand>
        <name>substrate</name>
    </ligand>
</feature>
<feature type="binding site" evidence="1">
    <location>
        <position position="152"/>
    </location>
    <ligand>
        <name>Zn(2+)</name>
        <dbReference type="ChEBI" id="CHEBI:29105"/>
        <label>1</label>
    </ligand>
</feature>
<feature type="binding site" evidence="1">
    <location>
        <position position="152"/>
    </location>
    <ligand>
        <name>Zn(2+)</name>
        <dbReference type="ChEBI" id="CHEBI:29105"/>
        <label>2</label>
    </ligand>
</feature>
<feature type="binding site" evidence="1">
    <location>
        <position position="179"/>
    </location>
    <ligand>
        <name>Zn(2+)</name>
        <dbReference type="ChEBI" id="CHEBI:29105"/>
        <label>2</label>
    </ligand>
</feature>
<feature type="binding site" evidence="1">
    <location>
        <position position="232"/>
    </location>
    <ligand>
        <name>Zn(2+)</name>
        <dbReference type="ChEBI" id="CHEBI:29105"/>
        <label>2</label>
    </ligand>
</feature>
<feature type="binding site" evidence="1">
    <location>
        <position position="278"/>
    </location>
    <ligand>
        <name>substrate</name>
    </ligand>
</feature>
<feature type="binding site" evidence="1">
    <location>
        <position position="305"/>
    </location>
    <ligand>
        <name>Zn(2+)</name>
        <dbReference type="ChEBI" id="CHEBI:29105"/>
        <label>1</label>
    </ligand>
</feature>
<feature type="binding site" evidence="1">
    <location>
        <position position="309"/>
    </location>
    <ligand>
        <name>substrate</name>
    </ligand>
</feature>
<feature type="binding site" evidence="1">
    <location>
        <begin position="323"/>
        <end position="324"/>
    </location>
    <ligand>
        <name>substrate</name>
    </ligand>
</feature>
<reference key="1">
    <citation type="journal article" date="1994" name="Microbiology">
        <title>Molecular characterization of pyrimidine biosynthesis genes from the thermophile Bacillus caldolyticus.</title>
        <authorList>
            <person name="Ghim S.Y."/>
            <person name="Nielsen P."/>
            <person name="Neuhard J."/>
        </authorList>
    </citation>
    <scope>NUCLEOTIDE SEQUENCE [GENOMIC DNA]</scope>
    <source>
        <strain>DSM 405 / NBRC 15313 / YP-T</strain>
    </source>
</reference>
<dbReference type="EC" id="3.5.2.3" evidence="1"/>
<dbReference type="EMBL" id="X73308">
    <property type="protein sequence ID" value="CAA51737.1"/>
    <property type="molecule type" value="Genomic_DNA"/>
</dbReference>
<dbReference type="PIR" id="I40167">
    <property type="entry name" value="I40167"/>
</dbReference>
<dbReference type="SMR" id="P46538"/>
<dbReference type="UniPathway" id="UPA00070">
    <property type="reaction ID" value="UER00117"/>
</dbReference>
<dbReference type="GO" id="GO:0005737">
    <property type="term" value="C:cytoplasm"/>
    <property type="evidence" value="ECO:0007669"/>
    <property type="project" value="TreeGrafter"/>
</dbReference>
<dbReference type="GO" id="GO:0004038">
    <property type="term" value="F:allantoinase activity"/>
    <property type="evidence" value="ECO:0007669"/>
    <property type="project" value="TreeGrafter"/>
</dbReference>
<dbReference type="GO" id="GO:0004151">
    <property type="term" value="F:dihydroorotase activity"/>
    <property type="evidence" value="ECO:0007669"/>
    <property type="project" value="UniProtKB-UniRule"/>
</dbReference>
<dbReference type="GO" id="GO:0008270">
    <property type="term" value="F:zinc ion binding"/>
    <property type="evidence" value="ECO:0007669"/>
    <property type="project" value="UniProtKB-UniRule"/>
</dbReference>
<dbReference type="GO" id="GO:0044205">
    <property type="term" value="P:'de novo' UMP biosynthetic process"/>
    <property type="evidence" value="ECO:0007669"/>
    <property type="project" value="UniProtKB-UniRule"/>
</dbReference>
<dbReference type="GO" id="GO:0006145">
    <property type="term" value="P:purine nucleobase catabolic process"/>
    <property type="evidence" value="ECO:0007669"/>
    <property type="project" value="TreeGrafter"/>
</dbReference>
<dbReference type="CDD" id="cd01317">
    <property type="entry name" value="DHOase_IIa"/>
    <property type="match status" value="1"/>
</dbReference>
<dbReference type="Gene3D" id="3.20.20.140">
    <property type="entry name" value="Metal-dependent hydrolases"/>
    <property type="match status" value="1"/>
</dbReference>
<dbReference type="Gene3D" id="2.30.40.10">
    <property type="entry name" value="Urease, subunit C, domain 1"/>
    <property type="match status" value="1"/>
</dbReference>
<dbReference type="HAMAP" id="MF_00220_B">
    <property type="entry name" value="PyrC_classI_B"/>
    <property type="match status" value="1"/>
</dbReference>
<dbReference type="InterPro" id="IPR004722">
    <property type="entry name" value="DHOase"/>
</dbReference>
<dbReference type="InterPro" id="IPR050138">
    <property type="entry name" value="DHOase/Allantoinase_Hydrolase"/>
</dbReference>
<dbReference type="InterPro" id="IPR024403">
    <property type="entry name" value="DHOase_bac"/>
</dbReference>
<dbReference type="InterPro" id="IPR002195">
    <property type="entry name" value="Dihydroorotase_CS"/>
</dbReference>
<dbReference type="InterPro" id="IPR011059">
    <property type="entry name" value="Metal-dep_hydrolase_composite"/>
</dbReference>
<dbReference type="InterPro" id="IPR032466">
    <property type="entry name" value="Metal_Hydrolase"/>
</dbReference>
<dbReference type="NCBIfam" id="NF006837">
    <property type="entry name" value="PRK09357.1-2"/>
    <property type="match status" value="1"/>
</dbReference>
<dbReference type="NCBIfam" id="TIGR00857">
    <property type="entry name" value="pyrC_multi"/>
    <property type="match status" value="1"/>
</dbReference>
<dbReference type="PANTHER" id="PTHR43668">
    <property type="entry name" value="ALLANTOINASE"/>
    <property type="match status" value="1"/>
</dbReference>
<dbReference type="PANTHER" id="PTHR43668:SF2">
    <property type="entry name" value="ALLANTOINASE"/>
    <property type="match status" value="1"/>
</dbReference>
<dbReference type="Pfam" id="PF12890">
    <property type="entry name" value="DHOase"/>
    <property type="match status" value="1"/>
</dbReference>
<dbReference type="SUPFAM" id="SSF51338">
    <property type="entry name" value="Composite domain of metallo-dependent hydrolases"/>
    <property type="match status" value="1"/>
</dbReference>
<dbReference type="SUPFAM" id="SSF51556">
    <property type="entry name" value="Metallo-dependent hydrolases"/>
    <property type="match status" value="1"/>
</dbReference>
<dbReference type="PROSITE" id="PS00482">
    <property type="entry name" value="DIHYDROOROTASE_1"/>
    <property type="match status" value="1"/>
</dbReference>
<dbReference type="PROSITE" id="PS00483">
    <property type="entry name" value="DIHYDROOROTASE_2"/>
    <property type="match status" value="1"/>
</dbReference>
<protein>
    <recommendedName>
        <fullName evidence="1">Dihydroorotase</fullName>
        <shortName evidence="1">DHOase</shortName>
        <ecNumber evidence="1">3.5.2.3</ecNumber>
    </recommendedName>
</protein>
<sequence>MGVWLKNGMSFNKDGELMRTHIKIEHGTIAAILYEQPLEANEDVIDVGGRLIVPGLIDLHVHLREPGGEAKETIETGTLAAAKGGFTTVAAMPNTNPAPDRKEQMEWLQARIRETARVNVLPYAAITIGQKGEELTDFAALKEAGAFAFTDDGVGVQSAGMMFEAMKQAAALDMAIVAHCEDDTLTNGGAVHDGEFARRYGLRGIPSVCEAVHIARDVLLAEAAGCHYHVCHISTKESVRVVRDAKRAGIRVTAEVTPHHLLLCDEDIPGLDANYKMNPPLRSREDRDALIEGLLDGTIDFIATDHAPHTAAEKAKGIEAAPFGIVGLETAFPLLYTHFVKTGVFTLKQLVDWLTIKPAQCFGLKAGRLAVGAPADIAVIDLETEEAIDPETFASKGKNTPFAGWVCQGWPVMTFVGGTLVWEKGRA</sequence>
<accession>P46538</accession>
<comment type="function">
    <text evidence="1">Catalyzes the reversible cyclization of carbamoyl aspartate to dihydroorotate.</text>
</comment>
<comment type="catalytic activity">
    <reaction evidence="1">
        <text>(S)-dihydroorotate + H2O = N-carbamoyl-L-aspartate + H(+)</text>
        <dbReference type="Rhea" id="RHEA:24296"/>
        <dbReference type="ChEBI" id="CHEBI:15377"/>
        <dbReference type="ChEBI" id="CHEBI:15378"/>
        <dbReference type="ChEBI" id="CHEBI:30864"/>
        <dbReference type="ChEBI" id="CHEBI:32814"/>
        <dbReference type="EC" id="3.5.2.3"/>
    </reaction>
</comment>
<comment type="cofactor">
    <cofactor evidence="1">
        <name>Zn(2+)</name>
        <dbReference type="ChEBI" id="CHEBI:29105"/>
    </cofactor>
    <text evidence="1">Binds 2 Zn(2+) ions per subunit.</text>
</comment>
<comment type="pathway">
    <text evidence="1">Pyrimidine metabolism; UMP biosynthesis via de novo pathway; (S)-dihydroorotate from bicarbonate: step 3/3.</text>
</comment>
<comment type="similarity">
    <text evidence="1">Belongs to the metallo-dependent hydrolases superfamily. DHOase family. Class I DHOase subfamily.</text>
</comment>